<evidence type="ECO:0000250" key="1"/>
<evidence type="ECO:0000250" key="2">
    <source>
        <dbReference type="UniProtKB" id="P02787"/>
    </source>
</evidence>
<evidence type="ECO:0000255" key="3"/>
<evidence type="ECO:0000255" key="4">
    <source>
        <dbReference type="PROSITE-ProRule" id="PRU00741"/>
    </source>
</evidence>
<comment type="function">
    <text>Transferrins are iron binding transport proteins which can bind two Fe(3+) ions in association with the binding of an anion, usually bicarbonate.</text>
</comment>
<comment type="subunit">
    <text evidence="2">Monomer.</text>
</comment>
<comment type="subcellular location">
    <subcellularLocation>
        <location>Secreted</location>
    </subcellularLocation>
</comment>
<comment type="similarity">
    <text evidence="4">Belongs to the transferrin family.</text>
</comment>
<feature type="signal peptide" evidence="1">
    <location>
        <begin position="1"/>
        <end position="16"/>
    </location>
</feature>
<feature type="chain" id="PRO_0000035723" description="Serotransferrin">
    <location>
        <begin position="17"/>
        <end position="685"/>
    </location>
</feature>
<feature type="domain" description="Transferrin-like 1" evidence="4">
    <location>
        <begin position="23"/>
        <end position="329"/>
    </location>
</feature>
<feature type="domain" description="Transferrin-like 2" evidence="4">
    <location>
        <begin position="340"/>
        <end position="666"/>
    </location>
</feature>
<feature type="binding site" evidence="4">
    <location>
        <position position="72"/>
    </location>
    <ligand>
        <name>Fe(3+)</name>
        <dbReference type="ChEBI" id="CHEBI:29034"/>
        <label>1</label>
    </ligand>
</feature>
<feature type="binding site" evidence="4">
    <location>
        <position position="102"/>
    </location>
    <ligand>
        <name>Fe(3+)</name>
        <dbReference type="ChEBI" id="CHEBI:29034"/>
        <label>1</label>
    </ligand>
</feature>
<feature type="binding site" evidence="4">
    <location>
        <position position="127"/>
    </location>
    <ligand>
        <name>hydrogencarbonate</name>
        <dbReference type="ChEBI" id="CHEBI:17544"/>
        <label>1</label>
    </ligand>
</feature>
<feature type="binding site" evidence="4">
    <location>
        <position position="131"/>
    </location>
    <ligand>
        <name>hydrogencarbonate</name>
        <dbReference type="ChEBI" id="CHEBI:17544"/>
        <label>1</label>
    </ligand>
</feature>
<feature type="binding site" evidence="4">
    <location>
        <position position="133"/>
    </location>
    <ligand>
        <name>hydrogencarbonate</name>
        <dbReference type="ChEBI" id="CHEBI:17544"/>
        <label>1</label>
    </ligand>
</feature>
<feature type="binding site" evidence="4">
    <location>
        <position position="134"/>
    </location>
    <ligand>
        <name>hydrogencarbonate</name>
        <dbReference type="ChEBI" id="CHEBI:17544"/>
        <label>1</label>
    </ligand>
</feature>
<feature type="binding site" evidence="4">
    <location>
        <position position="200"/>
    </location>
    <ligand>
        <name>Fe(3+)</name>
        <dbReference type="ChEBI" id="CHEBI:29034"/>
        <label>1</label>
    </ligand>
</feature>
<feature type="binding site" evidence="4">
    <location>
        <position position="256"/>
    </location>
    <ligand>
        <name>Fe(3+)</name>
        <dbReference type="ChEBI" id="CHEBI:29034"/>
        <label>1</label>
    </ligand>
</feature>
<feature type="binding site" evidence="4">
    <location>
        <position position="394"/>
    </location>
    <ligand>
        <name>Fe(3+)</name>
        <dbReference type="ChEBI" id="CHEBI:29034"/>
        <label>2</label>
    </ligand>
</feature>
<feature type="binding site" evidence="4">
    <location>
        <position position="428"/>
    </location>
    <ligand>
        <name>Fe(3+)</name>
        <dbReference type="ChEBI" id="CHEBI:29034"/>
        <label>2</label>
    </ligand>
</feature>
<feature type="binding site" evidence="4">
    <location>
        <position position="453"/>
    </location>
    <ligand>
        <name>hydrogencarbonate</name>
        <dbReference type="ChEBI" id="CHEBI:17544"/>
        <label>2</label>
    </ligand>
</feature>
<feature type="binding site" evidence="4">
    <location>
        <position position="457"/>
    </location>
    <ligand>
        <name>hydrogencarbonate</name>
        <dbReference type="ChEBI" id="CHEBI:17544"/>
        <label>2</label>
    </ligand>
</feature>
<feature type="binding site" evidence="4">
    <location>
        <position position="459"/>
    </location>
    <ligand>
        <name>hydrogencarbonate</name>
        <dbReference type="ChEBI" id="CHEBI:17544"/>
        <label>2</label>
    </ligand>
</feature>
<feature type="binding site" evidence="4">
    <location>
        <position position="460"/>
    </location>
    <ligand>
        <name>hydrogencarbonate</name>
        <dbReference type="ChEBI" id="CHEBI:17544"/>
        <label>2</label>
    </ligand>
</feature>
<feature type="binding site" evidence="4">
    <location>
        <position position="520"/>
    </location>
    <ligand>
        <name>Fe(3+)</name>
        <dbReference type="ChEBI" id="CHEBI:29034"/>
        <label>2</label>
    </ligand>
</feature>
<feature type="binding site" evidence="4">
    <location>
        <position position="588"/>
    </location>
    <ligand>
        <name>Fe(3+)</name>
        <dbReference type="ChEBI" id="CHEBI:29034"/>
        <label>2</label>
    </ligand>
</feature>
<feature type="glycosylation site" description="N-linked (GlcNAc...) asparagine" evidence="3">
    <location>
        <position position="476"/>
    </location>
</feature>
<feature type="disulfide bond" evidence="4">
    <location>
        <begin position="26"/>
        <end position="48"/>
    </location>
</feature>
<feature type="disulfide bond" evidence="4">
    <location>
        <begin position="125"/>
        <end position="206"/>
    </location>
</feature>
<feature type="disulfide bond" evidence="4">
    <location>
        <begin position="170"/>
        <end position="184"/>
    </location>
</feature>
<feature type="disulfide bond" evidence="4">
    <location>
        <begin position="234"/>
        <end position="248"/>
    </location>
</feature>
<feature type="disulfide bond" evidence="4">
    <location>
        <begin position="343"/>
        <end position="379"/>
    </location>
</feature>
<feature type="disulfide bond" evidence="4">
    <location>
        <begin position="353"/>
        <end position="370"/>
    </location>
</feature>
<feature type="disulfide bond" evidence="4">
    <location>
        <begin position="404"/>
        <end position="678"/>
    </location>
</feature>
<feature type="disulfide bond" evidence="4">
    <location>
        <begin position="419"/>
        <end position="639"/>
    </location>
</feature>
<feature type="disulfide bond" evidence="4">
    <location>
        <begin position="451"/>
        <end position="526"/>
    </location>
</feature>
<feature type="disulfide bond" evidence="4">
    <location>
        <begin position="475"/>
        <end position="667"/>
    </location>
</feature>
<feature type="disulfide bond" evidence="4">
    <location>
        <begin position="485"/>
        <end position="499"/>
    </location>
</feature>
<feature type="disulfide bond" evidence="4">
    <location>
        <begin position="496"/>
        <end position="509"/>
    </location>
</feature>
<feature type="disulfide bond" evidence="4">
    <location>
        <begin position="566"/>
        <end position="580"/>
    </location>
</feature>
<sequence length="685" mass="74655">MKPLLLLPLLGCLATIASCIDTVKWCVTSTKENLKCTALAAAAPVFSCVARASITDCLTAIKAGEADAITLDGGEIYTAGLDEYKLHPIIAEQYGTSTDTCYYAVAVAKKNTGFGLHQLMGKKSCHTGVGKSAGWNIPIGTLLSMDFIKWKGSDDKKLEEVVGEFFHSSCAPGATDSANLCKLCIGDCSKSSETEPYYNYHGAFQCLKDGKGDVAFVKHLTVPEEEKNDYELLCKDNTRKPIDQFENCDLAKVPSHAVVTRKDNEELAQFIWQSLSSVKNFNLFSSTPYGGKNLMFKDSTTTLVQLPLNVDHTMYLGPHYLESVKALKIVNIPSTTSDAMKWCAVGRSESDKCDSWSVASLVQDGTTIDCIKGNTVDDCLKKIMHKEADAMAVDGGQVYTAGKCGLVPAMVEQYDQGQCSAPGAARLYYAVAVIKKGSGVTWENLRNKRSCHTGIGRNAGWNIPMGLIYEQTKNCNFSAFFSSSCAPGADPSSQLCAQCAGNAESINKCKASNEERYYAYAGAFRCLAEGKGDVAFVKHSIVKENTDGQGPEWAKAFLSNDYELICPSKGPVSVENFMSCNLAKVNAHAVVTRPEIRTKVVTFLNNQQSHFGNSASEESFKMFTSPDGENLLFKYSTKCLQEIPAHLDYKGFLGQEYMTVMSSLRTCKESTSDLEQLCTYNMCQT</sequence>
<proteinExistence type="evidence at transcript level"/>
<accession>O93429</accession>
<organism>
    <name type="scientific">Paralichthys olivaceus</name>
    <name type="common">Bastard halibut</name>
    <name type="synonym">Hippoglossus olivaceus</name>
    <dbReference type="NCBI Taxonomy" id="8255"/>
    <lineage>
        <taxon>Eukaryota</taxon>
        <taxon>Metazoa</taxon>
        <taxon>Chordata</taxon>
        <taxon>Craniata</taxon>
        <taxon>Vertebrata</taxon>
        <taxon>Euteleostomi</taxon>
        <taxon>Actinopterygii</taxon>
        <taxon>Neopterygii</taxon>
        <taxon>Teleostei</taxon>
        <taxon>Neoteleostei</taxon>
        <taxon>Acanthomorphata</taxon>
        <taxon>Carangaria</taxon>
        <taxon>Pleuronectiformes</taxon>
        <taxon>Pleuronectoidei</taxon>
        <taxon>Paralichthyidae</taxon>
        <taxon>Paralichthys</taxon>
    </lineage>
</organism>
<dbReference type="EMBL" id="D88801">
    <property type="protein sequence ID" value="BAA28944.1"/>
    <property type="molecule type" value="mRNA"/>
</dbReference>
<dbReference type="SMR" id="O93429"/>
<dbReference type="MEROPS" id="S60.970"/>
<dbReference type="GlyCosmos" id="O93429">
    <property type="glycosylation" value="1 site, No reported glycans"/>
</dbReference>
<dbReference type="GO" id="GO:0005769">
    <property type="term" value="C:early endosome"/>
    <property type="evidence" value="ECO:0007669"/>
    <property type="project" value="TreeGrafter"/>
</dbReference>
<dbReference type="GO" id="GO:0005615">
    <property type="term" value="C:extracellular space"/>
    <property type="evidence" value="ECO:0007669"/>
    <property type="project" value="InterPro"/>
</dbReference>
<dbReference type="GO" id="GO:0005886">
    <property type="term" value="C:plasma membrane"/>
    <property type="evidence" value="ECO:0007669"/>
    <property type="project" value="TreeGrafter"/>
</dbReference>
<dbReference type="GO" id="GO:0055037">
    <property type="term" value="C:recycling endosome"/>
    <property type="evidence" value="ECO:0007669"/>
    <property type="project" value="TreeGrafter"/>
</dbReference>
<dbReference type="GO" id="GO:0046872">
    <property type="term" value="F:metal ion binding"/>
    <property type="evidence" value="ECO:0007669"/>
    <property type="project" value="UniProtKB-KW"/>
</dbReference>
<dbReference type="GO" id="GO:0019731">
    <property type="term" value="P:antibacterial humoral response"/>
    <property type="evidence" value="ECO:0007669"/>
    <property type="project" value="TreeGrafter"/>
</dbReference>
<dbReference type="GO" id="GO:0006826">
    <property type="term" value="P:iron ion transport"/>
    <property type="evidence" value="ECO:0007669"/>
    <property type="project" value="UniProtKB-KW"/>
</dbReference>
<dbReference type="FunFam" id="3.40.190.10:FF:000095">
    <property type="entry name" value="Lactotransferrin"/>
    <property type="match status" value="2"/>
</dbReference>
<dbReference type="Gene3D" id="3.40.190.10">
    <property type="entry name" value="Periplasmic binding protein-like II"/>
    <property type="match status" value="4"/>
</dbReference>
<dbReference type="InterPro" id="IPR016357">
    <property type="entry name" value="Transferrin"/>
</dbReference>
<dbReference type="InterPro" id="IPR001156">
    <property type="entry name" value="Transferrin-like_dom"/>
</dbReference>
<dbReference type="InterPro" id="IPR018195">
    <property type="entry name" value="Transferrin_Fe_BS"/>
</dbReference>
<dbReference type="PANTHER" id="PTHR11485:SF31">
    <property type="entry name" value="SEROTRANSFERRIN"/>
    <property type="match status" value="1"/>
</dbReference>
<dbReference type="PANTHER" id="PTHR11485">
    <property type="entry name" value="TRANSFERRIN"/>
    <property type="match status" value="1"/>
</dbReference>
<dbReference type="Pfam" id="PF00405">
    <property type="entry name" value="Transferrin"/>
    <property type="match status" value="2"/>
</dbReference>
<dbReference type="PIRSF" id="PIRSF002549">
    <property type="entry name" value="Transferrin"/>
    <property type="match status" value="1"/>
</dbReference>
<dbReference type="PRINTS" id="PR00422">
    <property type="entry name" value="TRANSFERRIN"/>
</dbReference>
<dbReference type="SMART" id="SM00094">
    <property type="entry name" value="TR_FER"/>
    <property type="match status" value="2"/>
</dbReference>
<dbReference type="SUPFAM" id="SSF53850">
    <property type="entry name" value="Periplasmic binding protein-like II"/>
    <property type="match status" value="2"/>
</dbReference>
<dbReference type="PROSITE" id="PS00205">
    <property type="entry name" value="TRANSFERRIN_LIKE_1"/>
    <property type="match status" value="2"/>
</dbReference>
<dbReference type="PROSITE" id="PS00206">
    <property type="entry name" value="TRANSFERRIN_LIKE_2"/>
    <property type="match status" value="2"/>
</dbReference>
<dbReference type="PROSITE" id="PS00207">
    <property type="entry name" value="TRANSFERRIN_LIKE_3"/>
    <property type="match status" value="1"/>
</dbReference>
<dbReference type="PROSITE" id="PS51408">
    <property type="entry name" value="TRANSFERRIN_LIKE_4"/>
    <property type="match status" value="2"/>
</dbReference>
<keyword id="KW-1015">Disulfide bond</keyword>
<keyword id="KW-0325">Glycoprotein</keyword>
<keyword id="KW-0406">Ion transport</keyword>
<keyword id="KW-0408">Iron</keyword>
<keyword id="KW-0410">Iron transport</keyword>
<keyword id="KW-0479">Metal-binding</keyword>
<keyword id="KW-0677">Repeat</keyword>
<keyword id="KW-0964">Secreted</keyword>
<keyword id="KW-0732">Signal</keyword>
<keyword id="KW-0813">Transport</keyword>
<name>TRFE_PAROL</name>
<protein>
    <recommendedName>
        <fullName>Serotransferrin</fullName>
    </recommendedName>
</protein>
<gene>
    <name type="primary">tf</name>
</gene>
<reference key="1">
    <citation type="submission" date="1996-11" db="EMBL/GenBank/DDBJ databases">
        <title>Molecular cloning and sequence analysis of transferrin cDNA from Japanese flounder Paralichthys olivaceus.</title>
        <authorList>
            <person name="Kim Y."/>
            <person name="Lee J."/>
            <person name="Hong Y."/>
            <person name="Hirono I."/>
            <person name="Aoki T."/>
        </authorList>
    </citation>
    <scope>NUCLEOTIDE SEQUENCE [MRNA]</scope>
</reference>